<name>FP2_MYTGA</name>
<keyword id="KW-1015">Disulfide bond</keyword>
<keyword id="KW-0245">EGF-like domain</keyword>
<keyword id="KW-0325">Glycoprotein</keyword>
<keyword id="KW-0379">Hydroxylation</keyword>
<keyword id="KW-0677">Repeat</keyword>
<keyword id="KW-0964">Secreted</keyword>
<keyword id="KW-0732">Signal</keyword>
<reference key="1">
    <citation type="journal article" date="1995" name="J. Biol. Chem.">
        <title>Mussel adhesive plaque protein gene is a novel member of epidermal growth factor-like gene family.</title>
        <authorList>
            <person name="Inoue K."/>
            <person name="Takeuchi Y."/>
            <person name="Miki D."/>
            <person name="Odo S."/>
        </authorList>
    </citation>
    <scope>NUCLEOTIDE SEQUENCE [MRNA]</scope>
    <source>
        <tissue>Foot</tissue>
    </source>
</reference>
<gene>
    <name type="primary">FP2</name>
</gene>
<protein>
    <recommendedName>
        <fullName>Adhesive plaque matrix protein 2</fullName>
    </recommendedName>
    <alternativeName>
        <fullName>Foot protein 2</fullName>
    </alternativeName>
    <alternativeName>
        <fullName>MGFP-2</fullName>
        <shortName>MGFP2</shortName>
    </alternativeName>
</protein>
<comment type="function">
    <text>Provides adhesiveness to the mussel's foot. Mussels produce one of the strongest water insoluble glues. The mussel's adhesive is a bundle of threads, called a byssus, formed by a fibrous collagenous core coated with adhesive proteins.</text>
</comment>
<comment type="subcellular location">
    <subcellularLocation>
        <location>Secreted</location>
    </subcellularLocation>
</comment>
<comment type="tissue specificity">
    <text>Produced by the byssal gland.</text>
</comment>
<comment type="developmental stage">
    <text>Expression starts at the pediveliger, foot formation, stage.</text>
</comment>
<comment type="PTM">
    <text evidence="1">Contains L-DOPA (3',4'-dihydroxyphenylalanine).</text>
</comment>
<comment type="online information" name="Protein Spotlight">
    <link uri="https://www.proteinspotlight.org/back_issues/002"/>
    <text>Sticky business - Issue 2 of September 2001</text>
</comment>
<evidence type="ECO:0000250" key="1"/>
<evidence type="ECO:0000255" key="2"/>
<evidence type="ECO:0000255" key="3">
    <source>
        <dbReference type="PROSITE-ProRule" id="PRU00076"/>
    </source>
</evidence>
<dbReference type="EMBL" id="D43794">
    <property type="protein sequence ID" value="BAA07852.1"/>
    <property type="molecule type" value="mRNA"/>
</dbReference>
<dbReference type="PIR" id="A56175">
    <property type="entry name" value="A56175"/>
</dbReference>
<dbReference type="SMR" id="Q25464"/>
<dbReference type="GlyCosmos" id="Q25464">
    <property type="glycosylation" value="1 site, No reported glycans"/>
</dbReference>
<dbReference type="GO" id="GO:0005576">
    <property type="term" value="C:extracellular region"/>
    <property type="evidence" value="ECO:0007669"/>
    <property type="project" value="UniProtKB-SubCell"/>
</dbReference>
<dbReference type="GO" id="GO:0005509">
    <property type="term" value="F:calcium ion binding"/>
    <property type="evidence" value="ECO:0007669"/>
    <property type="project" value="InterPro"/>
</dbReference>
<dbReference type="CDD" id="cd00054">
    <property type="entry name" value="EGF_CA"/>
    <property type="match status" value="5"/>
</dbReference>
<dbReference type="FunFam" id="2.10.25.10:FF:000066">
    <property type="entry name" value="FAT atypical cadherin 4"/>
    <property type="match status" value="1"/>
</dbReference>
<dbReference type="FunFam" id="2.10.25.10:FF:000095">
    <property type="entry name" value="Notch, isoform B"/>
    <property type="match status" value="3"/>
</dbReference>
<dbReference type="FunFam" id="2.10.25.10:FF:000472">
    <property type="entry name" value="Uncharacterized protein, isoform A"/>
    <property type="match status" value="1"/>
</dbReference>
<dbReference type="Gene3D" id="2.10.25.10">
    <property type="entry name" value="Laminin"/>
    <property type="match status" value="11"/>
</dbReference>
<dbReference type="InterPro" id="IPR001881">
    <property type="entry name" value="EGF-like_Ca-bd_dom"/>
</dbReference>
<dbReference type="InterPro" id="IPR000742">
    <property type="entry name" value="EGF-like_dom"/>
</dbReference>
<dbReference type="InterPro" id="IPR000152">
    <property type="entry name" value="EGF-type_Asp/Asn_hydroxyl_site"/>
</dbReference>
<dbReference type="PANTHER" id="PTHR12916">
    <property type="entry name" value="CYTOCHROME C OXIDASE POLYPEPTIDE VIC-2"/>
    <property type="match status" value="1"/>
</dbReference>
<dbReference type="PANTHER" id="PTHR12916:SF4">
    <property type="entry name" value="UNINFLATABLE, ISOFORM C"/>
    <property type="match status" value="1"/>
</dbReference>
<dbReference type="Pfam" id="PF00008">
    <property type="entry name" value="EGF"/>
    <property type="match status" value="2"/>
</dbReference>
<dbReference type="Pfam" id="PF25024">
    <property type="entry name" value="EGF_TEN"/>
    <property type="match status" value="1"/>
</dbReference>
<dbReference type="SMART" id="SM00181">
    <property type="entry name" value="EGF"/>
    <property type="match status" value="11"/>
</dbReference>
<dbReference type="SMART" id="SM00179">
    <property type="entry name" value="EGF_CA"/>
    <property type="match status" value="10"/>
</dbReference>
<dbReference type="SUPFAM" id="SSF57196">
    <property type="entry name" value="EGF/Laminin"/>
    <property type="match status" value="11"/>
</dbReference>
<dbReference type="PROSITE" id="PS00010">
    <property type="entry name" value="ASX_HYDROXYL"/>
    <property type="match status" value="2"/>
</dbReference>
<dbReference type="PROSITE" id="PS00022">
    <property type="entry name" value="EGF_1"/>
    <property type="match status" value="11"/>
</dbReference>
<dbReference type="PROSITE" id="PS01186">
    <property type="entry name" value="EGF_2"/>
    <property type="match status" value="10"/>
</dbReference>
<dbReference type="PROSITE" id="PS50026">
    <property type="entry name" value="EGF_3"/>
    <property type="match status" value="11"/>
</dbReference>
<accession>Q25464</accession>
<organism>
    <name type="scientific">Mytilus galloprovincialis</name>
    <name type="common">Mediterranean mussel</name>
    <dbReference type="NCBI Taxonomy" id="29158"/>
    <lineage>
        <taxon>Eukaryota</taxon>
        <taxon>Metazoa</taxon>
        <taxon>Spiralia</taxon>
        <taxon>Lophotrochozoa</taxon>
        <taxon>Mollusca</taxon>
        <taxon>Bivalvia</taxon>
        <taxon>Autobranchia</taxon>
        <taxon>Pteriomorphia</taxon>
        <taxon>Mytilida</taxon>
        <taxon>Mytiloidea</taxon>
        <taxon>Mytilidae</taxon>
        <taxon>Mytilinae</taxon>
        <taxon>Mytilus</taxon>
    </lineage>
</organism>
<sequence length="473" mass="51772">MLFSFFLLLTCTQLCLGTNRPDYNDDEEDDYKPPVYKPSPSKYRPVNPCLKKPCKYNGVCKPRGGSYKCFCKGGYYGYNCNLKNACKPNQCKNKSRCVPVGKTFKCVCRNGNFGRLCEKNVCSPNPCKNNGKCSPLGKTGYKCTCSGGYTGPRCEVHACKPNPCKNKGRCFPDGKTGYKCRCVDGYSGPTCQENACKPNPCSNGGTCSADKFGDYSCECRPGYFGPECERYVCAPNPCKNGGICSSDGSGGYRCRCKGGYSGPTCKVNVCKPTPCKNSGRCVNKGSSYNCICKGGYSGPTCGENVCKPNPCQNRGRCYPDNSDDGFKCRCVGGYKGPTCEDKPNPCNTKPCKNGGKCNYNGKIYTCKCAYGWRGRHCTDKAYKPNPCVVSKPCKNRGKCIWNGKAYRCKCAYGYGGRHCTKKSYKKNPCASRPCKNRGKCTDKGNGYVCKCARGYSGRYCSLKSPPSYDDDEY</sequence>
<proteinExistence type="evidence at transcript level"/>
<feature type="signal peptide" evidence="2">
    <location>
        <begin position="1"/>
        <end position="17"/>
    </location>
</feature>
<feature type="chain" id="PRO_0000007588" description="Adhesive plaque matrix protein 2">
    <location>
        <begin position="18"/>
        <end position="473"/>
    </location>
</feature>
<feature type="domain" description="EGF-like 1" evidence="3">
    <location>
        <begin position="45"/>
        <end position="81"/>
    </location>
</feature>
<feature type="domain" description="EGF-like 2" evidence="3">
    <location>
        <begin position="82"/>
        <end position="117"/>
    </location>
</feature>
<feature type="domain" description="EGF-like 3" evidence="3">
    <location>
        <begin position="118"/>
        <end position="154"/>
    </location>
</feature>
<feature type="domain" description="EGF-like 4" evidence="3">
    <location>
        <begin position="155"/>
        <end position="191"/>
    </location>
</feature>
<feature type="domain" description="EGF-like 5" evidence="3">
    <location>
        <begin position="192"/>
        <end position="228"/>
    </location>
</feature>
<feature type="domain" description="EGF-like 6" evidence="3">
    <location>
        <begin position="229"/>
        <end position="265"/>
    </location>
</feature>
<feature type="domain" description="EGF-like 7" evidence="3">
    <location>
        <begin position="266"/>
        <end position="301"/>
    </location>
</feature>
<feature type="domain" description="EGF-like 8" evidence="3">
    <location>
        <begin position="302"/>
        <end position="340"/>
    </location>
</feature>
<feature type="domain" description="EGF-like 9" evidence="3">
    <location>
        <begin position="342"/>
        <end position="378"/>
    </location>
</feature>
<feature type="domain" description="EGF-like 10" evidence="3">
    <location>
        <begin position="383"/>
        <end position="420"/>
    </location>
</feature>
<feature type="domain" description="EGF-like 11" evidence="3">
    <location>
        <begin position="425"/>
        <end position="461"/>
    </location>
</feature>
<feature type="modified residue" description="3',4'-dihydroxyphenylalanine" evidence="1">
    <location>
        <position position="23"/>
    </location>
</feature>
<feature type="modified residue" description="3',4'-dihydroxyphenylalanine" evidence="1">
    <location>
        <position position="31"/>
    </location>
</feature>
<feature type="modified residue" description="3',4'-dihydroxyphenylalanine" evidence="1">
    <location>
        <position position="36"/>
    </location>
</feature>
<feature type="modified residue" description="3',4'-dihydroxyphenylalanine" evidence="1">
    <location>
        <position position="43"/>
    </location>
</feature>
<feature type="glycosylation site" description="N-linked (GlcNAc...) asparagine" evidence="2">
    <location>
        <position position="93"/>
    </location>
</feature>
<feature type="disulfide bond" evidence="3">
    <location>
        <begin position="49"/>
        <end position="60"/>
    </location>
</feature>
<feature type="disulfide bond" evidence="3">
    <location>
        <begin position="54"/>
        <end position="69"/>
    </location>
</feature>
<feature type="disulfide bond" evidence="3">
    <location>
        <begin position="71"/>
        <end position="80"/>
    </location>
</feature>
<feature type="disulfide bond" evidence="3">
    <location>
        <begin position="86"/>
        <end position="97"/>
    </location>
</feature>
<feature type="disulfide bond" evidence="3">
    <location>
        <begin position="91"/>
        <end position="106"/>
    </location>
</feature>
<feature type="disulfide bond" evidence="3">
    <location>
        <begin position="108"/>
        <end position="117"/>
    </location>
</feature>
<feature type="disulfide bond" evidence="3">
    <location>
        <begin position="122"/>
        <end position="133"/>
    </location>
</feature>
<feature type="disulfide bond" evidence="3">
    <location>
        <begin position="127"/>
        <end position="143"/>
    </location>
</feature>
<feature type="disulfide bond" evidence="3">
    <location>
        <begin position="145"/>
        <end position="154"/>
    </location>
</feature>
<feature type="disulfide bond" evidence="3">
    <location>
        <begin position="159"/>
        <end position="170"/>
    </location>
</feature>
<feature type="disulfide bond" evidence="3">
    <location>
        <begin position="164"/>
        <end position="180"/>
    </location>
</feature>
<feature type="disulfide bond" evidence="3">
    <location>
        <begin position="182"/>
        <end position="191"/>
    </location>
</feature>
<feature type="disulfide bond" evidence="3">
    <location>
        <begin position="196"/>
        <end position="207"/>
    </location>
</feature>
<feature type="disulfide bond" evidence="3">
    <location>
        <begin position="201"/>
        <end position="217"/>
    </location>
</feature>
<feature type="disulfide bond" evidence="3">
    <location>
        <begin position="219"/>
        <end position="228"/>
    </location>
</feature>
<feature type="disulfide bond" evidence="3">
    <location>
        <begin position="233"/>
        <end position="244"/>
    </location>
</feature>
<feature type="disulfide bond" evidence="3">
    <location>
        <begin position="238"/>
        <end position="254"/>
    </location>
</feature>
<feature type="disulfide bond" evidence="3">
    <location>
        <begin position="256"/>
        <end position="265"/>
    </location>
</feature>
<feature type="disulfide bond" evidence="3">
    <location>
        <begin position="270"/>
        <end position="281"/>
    </location>
</feature>
<feature type="disulfide bond" evidence="3">
    <location>
        <begin position="275"/>
        <end position="290"/>
    </location>
</feature>
<feature type="disulfide bond" evidence="3">
    <location>
        <begin position="292"/>
        <end position="301"/>
    </location>
</feature>
<feature type="disulfide bond" evidence="3">
    <location>
        <begin position="306"/>
        <end position="317"/>
    </location>
</feature>
<feature type="disulfide bond" evidence="3">
    <location>
        <begin position="311"/>
        <end position="328"/>
    </location>
</feature>
<feature type="disulfide bond" evidence="3">
    <location>
        <begin position="330"/>
        <end position="339"/>
    </location>
</feature>
<feature type="disulfide bond" evidence="3">
    <location>
        <begin position="346"/>
        <end position="357"/>
    </location>
</feature>
<feature type="disulfide bond" evidence="3">
    <location>
        <begin position="351"/>
        <end position="366"/>
    </location>
</feature>
<feature type="disulfide bond" evidence="3">
    <location>
        <begin position="368"/>
        <end position="377"/>
    </location>
</feature>
<feature type="disulfide bond" evidence="3">
    <location>
        <begin position="387"/>
        <end position="399"/>
    </location>
</feature>
<feature type="disulfide bond" evidence="3">
    <location>
        <begin position="393"/>
        <end position="408"/>
    </location>
</feature>
<feature type="disulfide bond" evidence="3">
    <location>
        <begin position="410"/>
        <end position="419"/>
    </location>
</feature>
<feature type="disulfide bond" evidence="3">
    <location>
        <begin position="429"/>
        <end position="440"/>
    </location>
</feature>
<feature type="disulfide bond" evidence="3">
    <location>
        <begin position="434"/>
        <end position="449"/>
    </location>
</feature>
<feature type="disulfide bond" evidence="3">
    <location>
        <begin position="451"/>
        <end position="460"/>
    </location>
</feature>